<feature type="chain" id="PRO_1000014042" description="Trp operon repressor homolog">
    <location>
        <begin position="1"/>
        <end position="101"/>
    </location>
</feature>
<feature type="DNA-binding region" evidence="1">
    <location>
        <begin position="59"/>
        <end position="82"/>
    </location>
</feature>
<comment type="function">
    <text evidence="1">This protein is an aporepressor. When complexed with L-tryptophan it binds the operator region of the trp operon and prevents the initiation of transcription.</text>
</comment>
<comment type="subunit">
    <text evidence="1">Homodimer.</text>
</comment>
<comment type="subcellular location">
    <subcellularLocation>
        <location evidence="1">Cytoplasm</location>
    </subcellularLocation>
</comment>
<comment type="similarity">
    <text evidence="1">Belongs to the TrpR family.</text>
</comment>
<keyword id="KW-0963">Cytoplasm</keyword>
<keyword id="KW-0238">DNA-binding</keyword>
<keyword id="KW-0678">Repressor</keyword>
<keyword id="KW-0804">Transcription</keyword>
<keyword id="KW-0805">Transcription regulation</keyword>
<evidence type="ECO:0000255" key="1">
    <source>
        <dbReference type="HAMAP-Rule" id="MF_00475"/>
    </source>
</evidence>
<protein>
    <recommendedName>
        <fullName evidence="1">Trp operon repressor homolog</fullName>
    </recommendedName>
</protein>
<sequence>MYISRNLEQWNAFLQMLKIAFEENKAQEFLTLLLTADERDAVGLRLQIVSQLIDKNMPQREIQQNLNTSAATITRGSNMIKTMDPDFMQWMKQHLDLIEKN</sequence>
<accession>Q4QM70</accession>
<reference key="1">
    <citation type="journal article" date="2005" name="J. Bacteriol.">
        <title>Genomic sequence of an otitis media isolate of nontypeable Haemophilus influenzae: comparative study with H. influenzae serotype d, strain KW20.</title>
        <authorList>
            <person name="Harrison A."/>
            <person name="Dyer D.W."/>
            <person name="Gillaspy A."/>
            <person name="Ray W.C."/>
            <person name="Mungur R."/>
            <person name="Carson M.B."/>
            <person name="Zhong H."/>
            <person name="Gipson J."/>
            <person name="Gipson M."/>
            <person name="Johnson L.S."/>
            <person name="Lewis L."/>
            <person name="Bakaletz L.O."/>
            <person name="Munson R.S. Jr."/>
        </authorList>
    </citation>
    <scope>NUCLEOTIDE SEQUENCE [LARGE SCALE GENOMIC DNA]</scope>
    <source>
        <strain>86-028NP</strain>
    </source>
</reference>
<dbReference type="EMBL" id="CP000057">
    <property type="protein sequence ID" value="AAX87877.1"/>
    <property type="molecule type" value="Genomic_DNA"/>
</dbReference>
<dbReference type="RefSeq" id="WP_005629736.1">
    <property type="nucleotide sequence ID" value="NC_007146.2"/>
</dbReference>
<dbReference type="SMR" id="Q4QM70"/>
<dbReference type="GeneID" id="93219871"/>
<dbReference type="KEGG" id="hit:NTHI0996"/>
<dbReference type="HOGENOM" id="CLU_147939_0_0_6"/>
<dbReference type="Proteomes" id="UP000002525">
    <property type="component" value="Chromosome"/>
</dbReference>
<dbReference type="GO" id="GO:0005737">
    <property type="term" value="C:cytoplasm"/>
    <property type="evidence" value="ECO:0007669"/>
    <property type="project" value="UniProtKB-SubCell"/>
</dbReference>
<dbReference type="GO" id="GO:0003700">
    <property type="term" value="F:DNA-binding transcription factor activity"/>
    <property type="evidence" value="ECO:0007669"/>
    <property type="project" value="InterPro"/>
</dbReference>
<dbReference type="GO" id="GO:0043565">
    <property type="term" value="F:sequence-specific DNA binding"/>
    <property type="evidence" value="ECO:0007669"/>
    <property type="project" value="InterPro"/>
</dbReference>
<dbReference type="GO" id="GO:0045892">
    <property type="term" value="P:negative regulation of DNA-templated transcription"/>
    <property type="evidence" value="ECO:0007669"/>
    <property type="project" value="UniProtKB-UniRule"/>
</dbReference>
<dbReference type="Gene3D" id="1.10.1270.10">
    <property type="entry name" value="TrpR-like"/>
    <property type="match status" value="1"/>
</dbReference>
<dbReference type="HAMAP" id="MF_00475">
    <property type="entry name" value="Trp_repressor"/>
    <property type="match status" value="1"/>
</dbReference>
<dbReference type="InterPro" id="IPR000831">
    <property type="entry name" value="Trp_repress"/>
</dbReference>
<dbReference type="InterPro" id="IPR013335">
    <property type="entry name" value="Trp_repress_bac"/>
</dbReference>
<dbReference type="InterPro" id="IPR010921">
    <property type="entry name" value="Trp_repressor/repl_initiator"/>
</dbReference>
<dbReference type="InterPro" id="IPR038116">
    <property type="entry name" value="TrpR-like_sf"/>
</dbReference>
<dbReference type="NCBIfam" id="TIGR01321">
    <property type="entry name" value="TrpR"/>
    <property type="match status" value="1"/>
</dbReference>
<dbReference type="PANTHER" id="PTHR38025">
    <property type="entry name" value="TRP OPERON REPRESSOR"/>
    <property type="match status" value="1"/>
</dbReference>
<dbReference type="PANTHER" id="PTHR38025:SF1">
    <property type="entry name" value="TRP OPERON REPRESSOR"/>
    <property type="match status" value="1"/>
</dbReference>
<dbReference type="Pfam" id="PF01371">
    <property type="entry name" value="Trp_repressor"/>
    <property type="match status" value="1"/>
</dbReference>
<dbReference type="PIRSF" id="PIRSF003196">
    <property type="entry name" value="Trp_repressor"/>
    <property type="match status" value="1"/>
</dbReference>
<dbReference type="SUPFAM" id="SSF48295">
    <property type="entry name" value="TrpR-like"/>
    <property type="match status" value="1"/>
</dbReference>
<gene>
    <name evidence="1" type="primary">trpR</name>
    <name type="ordered locus">NTHI0996</name>
</gene>
<proteinExistence type="inferred from homology"/>
<name>TRPR_HAEI8</name>
<organism>
    <name type="scientific">Haemophilus influenzae (strain 86-028NP)</name>
    <dbReference type="NCBI Taxonomy" id="281310"/>
    <lineage>
        <taxon>Bacteria</taxon>
        <taxon>Pseudomonadati</taxon>
        <taxon>Pseudomonadota</taxon>
        <taxon>Gammaproteobacteria</taxon>
        <taxon>Pasteurellales</taxon>
        <taxon>Pasteurellaceae</taxon>
        <taxon>Haemophilus</taxon>
    </lineage>
</organism>